<evidence type="ECO:0000255" key="1">
    <source>
        <dbReference type="HAMAP-Rule" id="MF_00539"/>
    </source>
</evidence>
<evidence type="ECO:0000256" key="2">
    <source>
        <dbReference type="SAM" id="MobiDB-lite"/>
    </source>
</evidence>
<evidence type="ECO:0000305" key="3"/>
<accession>B3PMF8</accession>
<comment type="similarity">
    <text evidence="1">Belongs to the bacterial ribosomal protein bL27 family.</text>
</comment>
<protein>
    <recommendedName>
        <fullName evidence="1">Large ribosomal subunit protein bL27</fullName>
    </recommendedName>
    <alternativeName>
        <fullName evidence="3">50S ribosomal protein L27</fullName>
    </alternativeName>
</protein>
<name>RL27_META1</name>
<dbReference type="EMBL" id="CP001047">
    <property type="protein sequence ID" value="ACF07210.1"/>
    <property type="molecule type" value="Genomic_DNA"/>
</dbReference>
<dbReference type="RefSeq" id="WP_012498167.1">
    <property type="nucleotide sequence ID" value="NC_011025.1"/>
</dbReference>
<dbReference type="SMR" id="B3PMF8"/>
<dbReference type="STRING" id="243272.MARTH_orf327"/>
<dbReference type="KEGG" id="mat:MARTH_orf327"/>
<dbReference type="eggNOG" id="COG0211">
    <property type="taxonomic scope" value="Bacteria"/>
</dbReference>
<dbReference type="HOGENOM" id="CLU_095424_4_1_14"/>
<dbReference type="Proteomes" id="UP000008812">
    <property type="component" value="Chromosome"/>
</dbReference>
<dbReference type="GO" id="GO:0022625">
    <property type="term" value="C:cytosolic large ribosomal subunit"/>
    <property type="evidence" value="ECO:0007669"/>
    <property type="project" value="TreeGrafter"/>
</dbReference>
<dbReference type="GO" id="GO:0003735">
    <property type="term" value="F:structural constituent of ribosome"/>
    <property type="evidence" value="ECO:0007669"/>
    <property type="project" value="InterPro"/>
</dbReference>
<dbReference type="GO" id="GO:0006412">
    <property type="term" value="P:translation"/>
    <property type="evidence" value="ECO:0007669"/>
    <property type="project" value="UniProtKB-UniRule"/>
</dbReference>
<dbReference type="FunFam" id="2.40.50.100:FF:000004">
    <property type="entry name" value="50S ribosomal protein L27"/>
    <property type="match status" value="1"/>
</dbReference>
<dbReference type="Gene3D" id="2.40.50.100">
    <property type="match status" value="1"/>
</dbReference>
<dbReference type="HAMAP" id="MF_00539">
    <property type="entry name" value="Ribosomal_bL27"/>
    <property type="match status" value="1"/>
</dbReference>
<dbReference type="InterPro" id="IPR001684">
    <property type="entry name" value="Ribosomal_bL27"/>
</dbReference>
<dbReference type="InterPro" id="IPR018261">
    <property type="entry name" value="Ribosomal_bL27_CS"/>
</dbReference>
<dbReference type="NCBIfam" id="TIGR00062">
    <property type="entry name" value="L27"/>
    <property type="match status" value="1"/>
</dbReference>
<dbReference type="PANTHER" id="PTHR15893:SF0">
    <property type="entry name" value="LARGE RIBOSOMAL SUBUNIT PROTEIN BL27M"/>
    <property type="match status" value="1"/>
</dbReference>
<dbReference type="PANTHER" id="PTHR15893">
    <property type="entry name" value="RIBOSOMAL PROTEIN L27"/>
    <property type="match status" value="1"/>
</dbReference>
<dbReference type="Pfam" id="PF01016">
    <property type="entry name" value="Ribosomal_L27"/>
    <property type="match status" value="1"/>
</dbReference>
<dbReference type="PRINTS" id="PR00063">
    <property type="entry name" value="RIBOSOMALL27"/>
</dbReference>
<dbReference type="SUPFAM" id="SSF110324">
    <property type="entry name" value="Ribosomal L27 protein-like"/>
    <property type="match status" value="1"/>
</dbReference>
<dbReference type="PROSITE" id="PS00831">
    <property type="entry name" value="RIBOSOMAL_L27"/>
    <property type="match status" value="1"/>
</dbReference>
<sequence length="90" mass="9816">MAHTKAGGTTRNSRDSAGRRLGVKATDGQFVNAGSIIYRQRGTKIFPGNNVGRGKDDTLFALISGIVKFEDRINRKFASVYAVEDLKAKK</sequence>
<keyword id="KW-1185">Reference proteome</keyword>
<keyword id="KW-0687">Ribonucleoprotein</keyword>
<keyword id="KW-0689">Ribosomal protein</keyword>
<feature type="chain" id="PRO_1000128774" description="Large ribosomal subunit protein bL27">
    <location>
        <begin position="1"/>
        <end position="90"/>
    </location>
</feature>
<feature type="region of interest" description="Disordered" evidence="2">
    <location>
        <begin position="1"/>
        <end position="21"/>
    </location>
</feature>
<organism>
    <name type="scientific">Metamycoplasma arthritidis (strain 158L3-1)</name>
    <name type="common">Mycoplasma arthritidis</name>
    <dbReference type="NCBI Taxonomy" id="243272"/>
    <lineage>
        <taxon>Bacteria</taxon>
        <taxon>Bacillati</taxon>
        <taxon>Mycoplasmatota</taxon>
        <taxon>Mycoplasmoidales</taxon>
        <taxon>Metamycoplasmataceae</taxon>
        <taxon>Metamycoplasma</taxon>
    </lineage>
</organism>
<reference key="1">
    <citation type="journal article" date="2008" name="Infect. Immun.">
        <title>Genome of Mycoplasma arthritidis.</title>
        <authorList>
            <person name="Dybvig K."/>
            <person name="Zuhua C."/>
            <person name="Lao P."/>
            <person name="Jordan D.S."/>
            <person name="French C.T."/>
            <person name="Tu A.H."/>
            <person name="Loraine A.E."/>
        </authorList>
    </citation>
    <scope>NUCLEOTIDE SEQUENCE [LARGE SCALE GENOMIC DNA]</scope>
    <source>
        <strain>158L3-1</strain>
    </source>
</reference>
<gene>
    <name evidence="1" type="primary">rpmA</name>
    <name type="ordered locus">MARTH_orf327</name>
</gene>
<proteinExistence type="inferred from homology"/>